<organism>
    <name type="scientific">Dictyostelium discoideum</name>
    <name type="common">Social amoeba</name>
    <dbReference type="NCBI Taxonomy" id="44689"/>
    <lineage>
        <taxon>Eukaryota</taxon>
        <taxon>Amoebozoa</taxon>
        <taxon>Evosea</taxon>
        <taxon>Eumycetozoa</taxon>
        <taxon>Dictyostelia</taxon>
        <taxon>Dictyosteliales</taxon>
        <taxon>Dictyosteliaceae</taxon>
        <taxon>Dictyostelium</taxon>
    </lineage>
</organism>
<reference key="1">
    <citation type="journal article" date="2005" name="Genome Biol.">
        <title>The Dictyostelium genome encodes numerous RasGEFs with multiple biological roles.</title>
        <authorList>
            <person name="Wilkins A."/>
            <person name="Szafranski K."/>
            <person name="Fraser D.J."/>
            <person name="Bakthavatsalam D."/>
            <person name="Mueller R."/>
            <person name="Fisher P.R."/>
            <person name="Gloeckner G."/>
            <person name="Eichinger L."/>
            <person name="Noegel A.A."/>
            <person name="Insall R.H."/>
        </authorList>
    </citation>
    <scope>NUCLEOTIDE SEQUENCE [LARGE SCALE GENOMIC DNA]</scope>
    <scope>DEVELOPMENTAL STAGE</scope>
    <source>
        <strain>AX4</strain>
    </source>
</reference>
<reference key="2">
    <citation type="journal article" date="2005" name="Nature">
        <title>The genome of the social amoeba Dictyostelium discoideum.</title>
        <authorList>
            <person name="Eichinger L."/>
            <person name="Pachebat J.A."/>
            <person name="Gloeckner G."/>
            <person name="Rajandream M.A."/>
            <person name="Sucgang R."/>
            <person name="Berriman M."/>
            <person name="Song J."/>
            <person name="Olsen R."/>
            <person name="Szafranski K."/>
            <person name="Xu Q."/>
            <person name="Tunggal B."/>
            <person name="Kummerfeld S."/>
            <person name="Madera M."/>
            <person name="Konfortov B.A."/>
            <person name="Rivero F."/>
            <person name="Bankier A.T."/>
            <person name="Lehmann R."/>
            <person name="Hamlin N."/>
            <person name="Davies R."/>
            <person name="Gaudet P."/>
            <person name="Fey P."/>
            <person name="Pilcher K."/>
            <person name="Chen G."/>
            <person name="Saunders D."/>
            <person name="Sodergren E.J."/>
            <person name="Davis P."/>
            <person name="Kerhornou A."/>
            <person name="Nie X."/>
            <person name="Hall N."/>
            <person name="Anjard C."/>
            <person name="Hemphill L."/>
            <person name="Bason N."/>
            <person name="Farbrother P."/>
            <person name="Desany B."/>
            <person name="Just E."/>
            <person name="Morio T."/>
            <person name="Rost R."/>
            <person name="Churcher C.M."/>
            <person name="Cooper J."/>
            <person name="Haydock S."/>
            <person name="van Driessche N."/>
            <person name="Cronin A."/>
            <person name="Goodhead I."/>
            <person name="Muzny D.M."/>
            <person name="Mourier T."/>
            <person name="Pain A."/>
            <person name="Lu M."/>
            <person name="Harper D."/>
            <person name="Lindsay R."/>
            <person name="Hauser H."/>
            <person name="James K.D."/>
            <person name="Quiles M."/>
            <person name="Madan Babu M."/>
            <person name="Saito T."/>
            <person name="Buchrieser C."/>
            <person name="Wardroper A."/>
            <person name="Felder M."/>
            <person name="Thangavelu M."/>
            <person name="Johnson D."/>
            <person name="Knights A."/>
            <person name="Loulseged H."/>
            <person name="Mungall K.L."/>
            <person name="Oliver K."/>
            <person name="Price C."/>
            <person name="Quail M.A."/>
            <person name="Urushihara H."/>
            <person name="Hernandez J."/>
            <person name="Rabbinowitsch E."/>
            <person name="Steffen D."/>
            <person name="Sanders M."/>
            <person name="Ma J."/>
            <person name="Kohara Y."/>
            <person name="Sharp S."/>
            <person name="Simmonds M.N."/>
            <person name="Spiegler S."/>
            <person name="Tivey A."/>
            <person name="Sugano S."/>
            <person name="White B."/>
            <person name="Walker D."/>
            <person name="Woodward J.R."/>
            <person name="Winckler T."/>
            <person name="Tanaka Y."/>
            <person name="Shaulsky G."/>
            <person name="Schleicher M."/>
            <person name="Weinstock G.M."/>
            <person name="Rosenthal A."/>
            <person name="Cox E.C."/>
            <person name="Chisholm R.L."/>
            <person name="Gibbs R.A."/>
            <person name="Loomis W.F."/>
            <person name="Platzer M."/>
            <person name="Kay R.R."/>
            <person name="Williams J.G."/>
            <person name="Dear P.H."/>
            <person name="Noegel A.A."/>
            <person name="Barrell B.G."/>
            <person name="Kuspa A."/>
        </authorList>
    </citation>
    <scope>NUCLEOTIDE SEQUENCE [LARGE SCALE GENOMIC DNA]</scope>
    <source>
        <strain>AX4</strain>
    </source>
</reference>
<reference key="3">
    <citation type="journal article" date="2007" name="EMBO Rep.">
        <title>Cyclic AMP signalling in Dictyostelium: G-proteins activate separate Ras pathways using specific RasGEFs.</title>
        <authorList>
            <person name="Kae H."/>
            <person name="Kortholt A."/>
            <person name="Rehmann H."/>
            <person name="Insall R.H."/>
            <person name="Van Haastert P.J."/>
            <person name="Spiegelman G.B."/>
            <person name="Weeks G."/>
        </authorList>
    </citation>
    <scope>FUNCTION</scope>
</reference>
<dbReference type="EMBL" id="AY160092">
    <property type="protein sequence ID" value="AAN46872.1"/>
    <property type="molecule type" value="Genomic_DNA"/>
</dbReference>
<dbReference type="EMBL" id="AAFI02000047">
    <property type="protein sequence ID" value="EAL66050.1"/>
    <property type="molecule type" value="Genomic_DNA"/>
</dbReference>
<dbReference type="RefSeq" id="XP_640241.1">
    <property type="nucleotide sequence ID" value="XM_635149.1"/>
</dbReference>
<dbReference type="SMR" id="Q8IS20"/>
<dbReference type="FunCoup" id="Q8IS20">
    <property type="interactions" value="43"/>
</dbReference>
<dbReference type="STRING" id="44689.Q8IS20"/>
<dbReference type="GlyGen" id="Q8IS20">
    <property type="glycosylation" value="1 site"/>
</dbReference>
<dbReference type="PaxDb" id="44689-DDB0215004"/>
<dbReference type="EnsemblProtists" id="EAL66050">
    <property type="protein sequence ID" value="EAL66050"/>
    <property type="gene ID" value="DDB_G0282381"/>
</dbReference>
<dbReference type="GeneID" id="8623780"/>
<dbReference type="KEGG" id="ddi:DDB_G0282381"/>
<dbReference type="dictyBase" id="DDB_G0282381">
    <property type="gene designation" value="gefC"/>
</dbReference>
<dbReference type="VEuPathDB" id="AmoebaDB:DDB_G0282381"/>
<dbReference type="eggNOG" id="KOG1426">
    <property type="taxonomic scope" value="Eukaryota"/>
</dbReference>
<dbReference type="eggNOG" id="KOG3417">
    <property type="taxonomic scope" value="Eukaryota"/>
</dbReference>
<dbReference type="HOGENOM" id="CLU_250987_0_0_1"/>
<dbReference type="InParanoid" id="Q8IS20"/>
<dbReference type="PRO" id="PR:Q8IS20"/>
<dbReference type="Proteomes" id="UP000002195">
    <property type="component" value="Chromosome 3"/>
</dbReference>
<dbReference type="GO" id="GO:0005886">
    <property type="term" value="C:plasma membrane"/>
    <property type="evidence" value="ECO:0000318"/>
    <property type="project" value="GO_Central"/>
</dbReference>
<dbReference type="GO" id="GO:0005085">
    <property type="term" value="F:guanyl-nucleotide exchange factor activity"/>
    <property type="evidence" value="ECO:0000318"/>
    <property type="project" value="GO_Central"/>
</dbReference>
<dbReference type="GO" id="GO:0007265">
    <property type="term" value="P:Ras protein signal transduction"/>
    <property type="evidence" value="ECO:0000318"/>
    <property type="project" value="GO_Central"/>
</dbReference>
<dbReference type="CDD" id="cd00155">
    <property type="entry name" value="RasGEF"/>
    <property type="match status" value="1"/>
</dbReference>
<dbReference type="CDD" id="cd06224">
    <property type="entry name" value="REM"/>
    <property type="match status" value="1"/>
</dbReference>
<dbReference type="Gene3D" id="1.20.900.10">
    <property type="entry name" value="Dbl homology (DH) domain"/>
    <property type="match status" value="1"/>
</dbReference>
<dbReference type="Gene3D" id="1.10.840.10">
    <property type="entry name" value="Ras guanine-nucleotide exchange factors catalytic domain"/>
    <property type="match status" value="1"/>
</dbReference>
<dbReference type="Gene3D" id="2.130.10.30">
    <property type="entry name" value="Regulator of chromosome condensation 1/beta-lactamase-inhibitor protein II"/>
    <property type="match status" value="3"/>
</dbReference>
<dbReference type="Gene3D" id="1.20.870.10">
    <property type="entry name" value="Son of sevenless (SoS) protein Chain: S domain 1"/>
    <property type="match status" value="1"/>
</dbReference>
<dbReference type="InterPro" id="IPR035899">
    <property type="entry name" value="DBL_dom_sf"/>
</dbReference>
<dbReference type="InterPro" id="IPR000219">
    <property type="entry name" value="DH_dom"/>
</dbReference>
<dbReference type="InterPro" id="IPR008937">
    <property type="entry name" value="Ras-like_GEF"/>
</dbReference>
<dbReference type="InterPro" id="IPR000651">
    <property type="entry name" value="Ras-like_Gua-exchang_fac_N"/>
</dbReference>
<dbReference type="InterPro" id="IPR019804">
    <property type="entry name" value="Ras_G-nucl-exch_fac_CS"/>
</dbReference>
<dbReference type="InterPro" id="IPR023578">
    <property type="entry name" value="Ras_GEF_dom_sf"/>
</dbReference>
<dbReference type="InterPro" id="IPR001895">
    <property type="entry name" value="RASGEF_cat_dom"/>
</dbReference>
<dbReference type="InterPro" id="IPR036964">
    <property type="entry name" value="RASGEF_cat_dom_sf"/>
</dbReference>
<dbReference type="InterPro" id="IPR009091">
    <property type="entry name" value="RCC1/BLIP-II"/>
</dbReference>
<dbReference type="InterPro" id="IPR000408">
    <property type="entry name" value="Reg_chr_condens"/>
</dbReference>
<dbReference type="PANTHER" id="PTHR23113">
    <property type="entry name" value="GUANINE NUCLEOTIDE EXCHANGE FACTOR"/>
    <property type="match status" value="1"/>
</dbReference>
<dbReference type="PANTHER" id="PTHR23113:SF160">
    <property type="entry name" value="RAS GUANINE NUCLEOTIDE EXCHANGE FACTOR C"/>
    <property type="match status" value="1"/>
</dbReference>
<dbReference type="Pfam" id="PF00617">
    <property type="entry name" value="RasGEF"/>
    <property type="match status" value="1"/>
</dbReference>
<dbReference type="Pfam" id="PF00618">
    <property type="entry name" value="RasGEF_N"/>
    <property type="match status" value="1"/>
</dbReference>
<dbReference type="Pfam" id="PF00415">
    <property type="entry name" value="RCC1"/>
    <property type="match status" value="3"/>
</dbReference>
<dbReference type="Pfam" id="PF13540">
    <property type="entry name" value="RCC1_2"/>
    <property type="match status" value="1"/>
</dbReference>
<dbReference type="Pfam" id="PF00621">
    <property type="entry name" value="RhoGEF"/>
    <property type="match status" value="1"/>
</dbReference>
<dbReference type="PRINTS" id="PR00633">
    <property type="entry name" value="RCCNDNSATION"/>
</dbReference>
<dbReference type="SMART" id="SM00147">
    <property type="entry name" value="RasGEF"/>
    <property type="match status" value="1"/>
</dbReference>
<dbReference type="SMART" id="SM00229">
    <property type="entry name" value="RasGEFN"/>
    <property type="match status" value="1"/>
</dbReference>
<dbReference type="SMART" id="SM00325">
    <property type="entry name" value="RhoGEF"/>
    <property type="match status" value="1"/>
</dbReference>
<dbReference type="SUPFAM" id="SSF48065">
    <property type="entry name" value="DBL homology domain (DH-domain)"/>
    <property type="match status" value="1"/>
</dbReference>
<dbReference type="SUPFAM" id="SSF48366">
    <property type="entry name" value="Ras GEF"/>
    <property type="match status" value="1"/>
</dbReference>
<dbReference type="SUPFAM" id="SSF50985">
    <property type="entry name" value="RCC1/BLIP-II"/>
    <property type="match status" value="2"/>
</dbReference>
<dbReference type="PROSITE" id="PS50010">
    <property type="entry name" value="DH_2"/>
    <property type="match status" value="1"/>
</dbReference>
<dbReference type="PROSITE" id="PS00720">
    <property type="entry name" value="RASGEF"/>
    <property type="match status" value="1"/>
</dbReference>
<dbReference type="PROSITE" id="PS50009">
    <property type="entry name" value="RASGEF_CAT"/>
    <property type="match status" value="1"/>
</dbReference>
<dbReference type="PROSITE" id="PS50212">
    <property type="entry name" value="RASGEF_NTER"/>
    <property type="match status" value="1"/>
</dbReference>
<dbReference type="PROSITE" id="PS00626">
    <property type="entry name" value="RCC1_2"/>
    <property type="match status" value="2"/>
</dbReference>
<dbReference type="PROSITE" id="PS50012">
    <property type="entry name" value="RCC1_3"/>
    <property type="match status" value="4"/>
</dbReference>
<name>GEFC_DICDI</name>
<gene>
    <name type="primary">gefC</name>
    <name type="synonym">racGEF</name>
    <name type="synonym">rasGEF</name>
    <name type="ORF">DDB_G0282381</name>
</gene>
<keyword id="KW-0175">Coiled coil</keyword>
<keyword id="KW-0344">Guanine-nucleotide releasing factor</keyword>
<keyword id="KW-1185">Reference proteome</keyword>
<keyword id="KW-0677">Repeat</keyword>
<evidence type="ECO:0000255" key="1"/>
<evidence type="ECO:0000255" key="2">
    <source>
        <dbReference type="PROSITE-ProRule" id="PRU00062"/>
    </source>
</evidence>
<evidence type="ECO:0000255" key="3">
    <source>
        <dbReference type="PROSITE-ProRule" id="PRU00135"/>
    </source>
</evidence>
<evidence type="ECO:0000255" key="4">
    <source>
        <dbReference type="PROSITE-ProRule" id="PRU00168"/>
    </source>
</evidence>
<evidence type="ECO:0000256" key="5">
    <source>
        <dbReference type="SAM" id="MobiDB-lite"/>
    </source>
</evidence>
<evidence type="ECO:0000269" key="6">
    <source>
    </source>
</evidence>
<evidence type="ECO:0000269" key="7">
    <source>
    </source>
</evidence>
<comment type="function">
    <text evidence="7">Promotes the exchange of Ras-bound GDP by GTP.</text>
</comment>
<comment type="developmental stage">
    <text evidence="6">Expressed during development; especially between 8 and 14 hours of development.</text>
</comment>
<protein>
    <recommendedName>
        <fullName>Ras guanine nucleotide exchange factor C</fullName>
    </recommendedName>
    <alternativeName>
        <fullName>RasGEF domain-containing protein C</fullName>
    </alternativeName>
</protein>
<sequence length="1457" mass="163235">MSVFTFGHGSNGALGLGKITDDTCPTPQKVNYFTEIDKRVKKVACGSYHTVFVTDDEHLYICGIKKDPKHGTTLFYTSPPPTTTTTTTTTSSTSATTTTTNGMVNEKNNNNKNNNGEKIVNSKPESVIIKDGASNTTNDSTSSSSTSTSSLSSSLPPTNIETPRDKKKPPIKLDKGIPHHRSTRELIQRPESPLLNKLLTSKAEMEFKHYESNEKSKDEMKDNENENEEDEDDDDDDSTIRQNEDKESSLIDDNESETSLRINKKDAENITNNIRLIKELDEQQQQPQQPQQNLKGIMNQPPLPTNDDLDEDPNIHFTPIRISTHFLENSPLNTIKQVALGNYHIVLLTEGGNVWTWGSNSNGQLGYLVDTQQQQQQQLQQQQSMSSLQPSASSSSPSSSSLQTTCTPKMVEIKCVKYIATGVKNTAALTEWGELYMWGINEHGELGLGDTIDRRTPTRVIRLKNEVVSTIACSSTHSACYTESGKMYVWGQSDETGKIQAIPSPLPIHSYLDREIKSPNGGGVGGFFGGGGKIKQLACGQRCIAVLTQMGEVFMWEIPGIPIPLRNALENHSVRNIVMGNFHLVCLTDSGEVVTIGRNKTGQLGRTDAENEPGIVKQLSFDPDGLNSDEFVVSIAAGEFHSVALVENTPKTKLALQLVRMQRNYLRQLNILNNIYYKSMMSMASPYDPVVLSMMNNGSASTLPPSLKGLSGGLPDNANNTIKNGKDKDNHHNGDSNGHHSNGHYHGNGNNGNNSITTSNSISSPSLLGSGGTLKSRSASIATIRGLFGINHMLHHSQSQSFQEENSTVTEDEIKEIFSDIEALSKLTEKFLSYLDQRMDNWDPVSKVLGDIFLDEALMAAYRIYIPYSDSYNTSCMTLFNIRRRNERLSNIIKDCEKKSKSFGVKLDQEFVKEIDLKSLLLSPLQNIPRIYILLRELGSDDSGNINPRDIDLINFAATKFQVLLERMNQNFQFVNAVEILHCSSNEYGNPQIMGGSLPQLVDKLTHHNISDPNFRDVFLLTFRAFTTPCNLFDLLVETFQRQKHLKNGRVVNVITSWVVHHFYDFEKDKLSDFTQDPNHNPQLLSEKLEQFIYSEDHQSVSQIKLQYFSHRKRLESSINLIDNQKLTQNEITTPPPLQIQNNNQNNNLENNNNNNNNNNTTTTTTTPNDNINDINNNNNNNNNNNNNNNNNNNNNNNNNNNNNNNNNLTNSTIKLVVQPPIPINFNLLDSQPIEVAQTLTIMDHHYFAMIDKREFLGQRWAKNKSPNIQISTDHFNRTSQVVVTEILKSKNSKQRSATLGYFISVAYCCFELNNLSGTASIIYGLNSASIQRLKKSWSKLPKESMIAFEYLDKIVTPMKNYISLRHLMTTIQPPCVPFLGTYLKDLTFIEEGNPSIIGGLINFYKQRKIAEVIFQIQQHQQVVYSAIRSNPTIKAFLMSSHTFDDKQAQKISSEAE</sequence>
<feature type="chain" id="PRO_0000384461" description="Ras guanine nucleotide exchange factor C">
    <location>
        <begin position="1"/>
        <end position="1457"/>
    </location>
</feature>
<feature type="repeat" description="RCC1 1">
    <location>
        <begin position="1"/>
        <end position="55"/>
    </location>
</feature>
<feature type="repeat" description="RCC1 2">
    <location>
        <begin position="351"/>
        <end position="401"/>
    </location>
</feature>
<feature type="repeat" description="RCC1 3">
    <location>
        <begin position="432"/>
        <end position="483"/>
    </location>
</feature>
<feature type="repeat" description="RCC1 4">
    <location>
        <begin position="485"/>
        <end position="549"/>
    </location>
</feature>
<feature type="repeat" description="RCC1 5">
    <location>
        <begin position="590"/>
        <end position="647"/>
    </location>
</feature>
<feature type="domain" description="DH" evidence="2">
    <location>
        <begin position="650"/>
        <end position="971"/>
    </location>
</feature>
<feature type="domain" description="N-terminal Ras-GEF" evidence="3">
    <location>
        <begin position="989"/>
        <end position="1109"/>
    </location>
</feature>
<feature type="domain" description="Ras-GEF" evidence="4">
    <location>
        <begin position="1232"/>
        <end position="1454"/>
    </location>
</feature>
<feature type="region of interest" description="Disordered" evidence="5">
    <location>
        <begin position="75"/>
        <end position="196"/>
    </location>
</feature>
<feature type="region of interest" description="Disordered" evidence="5">
    <location>
        <begin position="209"/>
        <end position="264"/>
    </location>
</feature>
<feature type="region of interest" description="Disordered" evidence="5">
    <location>
        <begin position="282"/>
        <end position="313"/>
    </location>
</feature>
<feature type="region of interest" description="Disordered" evidence="5">
    <location>
        <begin position="376"/>
        <end position="404"/>
    </location>
</feature>
<feature type="region of interest" description="Disordered" evidence="5">
    <location>
        <begin position="703"/>
        <end position="762"/>
    </location>
</feature>
<feature type="region of interest" description="Disordered" evidence="5">
    <location>
        <begin position="1127"/>
        <end position="1210"/>
    </location>
</feature>
<feature type="coiled-coil region" evidence="1">
    <location>
        <begin position="1138"/>
        <end position="1211"/>
    </location>
</feature>
<feature type="compositionally biased region" description="Low complexity" evidence="5">
    <location>
        <begin position="83"/>
        <end position="121"/>
    </location>
</feature>
<feature type="compositionally biased region" description="Low complexity" evidence="5">
    <location>
        <begin position="134"/>
        <end position="158"/>
    </location>
</feature>
<feature type="compositionally biased region" description="Basic and acidic residues" evidence="5">
    <location>
        <begin position="171"/>
        <end position="188"/>
    </location>
</feature>
<feature type="compositionally biased region" description="Basic and acidic residues" evidence="5">
    <location>
        <begin position="209"/>
        <end position="224"/>
    </location>
</feature>
<feature type="compositionally biased region" description="Acidic residues" evidence="5">
    <location>
        <begin position="225"/>
        <end position="237"/>
    </location>
</feature>
<feature type="compositionally biased region" description="Basic and acidic residues" evidence="5">
    <location>
        <begin position="238"/>
        <end position="249"/>
    </location>
</feature>
<feature type="compositionally biased region" description="Low complexity" evidence="5">
    <location>
        <begin position="283"/>
        <end position="292"/>
    </location>
</feature>
<feature type="compositionally biased region" description="Low complexity" evidence="5">
    <location>
        <begin position="376"/>
        <end position="403"/>
    </location>
</feature>
<feature type="compositionally biased region" description="Low complexity" evidence="5">
    <location>
        <begin position="703"/>
        <end position="715"/>
    </location>
</feature>
<feature type="compositionally biased region" description="Basic and acidic residues" evidence="5">
    <location>
        <begin position="724"/>
        <end position="738"/>
    </location>
</feature>
<feature type="compositionally biased region" description="Low complexity" evidence="5">
    <location>
        <begin position="739"/>
        <end position="762"/>
    </location>
</feature>
<feature type="compositionally biased region" description="Low complexity" evidence="5">
    <location>
        <begin position="1142"/>
        <end position="1210"/>
    </location>
</feature>
<accession>Q8IS20</accession>
<accession>Q54RZ8</accession>
<proteinExistence type="evidence at transcript level"/>